<gene>
    <name evidence="1" type="primary">tyrS</name>
    <name type="ordered locus">HI_1610</name>
</gene>
<reference key="1">
    <citation type="journal article" date="1995" name="Science">
        <title>Whole-genome random sequencing and assembly of Haemophilus influenzae Rd.</title>
        <authorList>
            <person name="Fleischmann R.D."/>
            <person name="Adams M.D."/>
            <person name="White O."/>
            <person name="Clayton R.A."/>
            <person name="Kirkness E.F."/>
            <person name="Kerlavage A.R."/>
            <person name="Bult C.J."/>
            <person name="Tomb J.-F."/>
            <person name="Dougherty B.A."/>
            <person name="Merrick J.M."/>
            <person name="McKenney K."/>
            <person name="Sutton G.G."/>
            <person name="FitzHugh W."/>
            <person name="Fields C.A."/>
            <person name="Gocayne J.D."/>
            <person name="Scott J.D."/>
            <person name="Shirley R."/>
            <person name="Liu L.-I."/>
            <person name="Glodek A."/>
            <person name="Kelley J.M."/>
            <person name="Weidman J.F."/>
            <person name="Phillips C.A."/>
            <person name="Spriggs T."/>
            <person name="Hedblom E."/>
            <person name="Cotton M.D."/>
            <person name="Utterback T.R."/>
            <person name="Hanna M.C."/>
            <person name="Nguyen D.T."/>
            <person name="Saudek D.M."/>
            <person name="Brandon R.C."/>
            <person name="Fine L.D."/>
            <person name="Fritchman J.L."/>
            <person name="Fuhrmann J.L."/>
            <person name="Geoghagen N.S.M."/>
            <person name="Gnehm C.L."/>
            <person name="McDonald L.A."/>
            <person name="Small K.V."/>
            <person name="Fraser C.M."/>
            <person name="Smith H.O."/>
            <person name="Venter J.C."/>
        </authorList>
    </citation>
    <scope>NUCLEOTIDE SEQUENCE [LARGE SCALE GENOMIC DNA]</scope>
    <source>
        <strain>ATCC 51907 / DSM 11121 / KW20 / Rd</strain>
    </source>
</reference>
<feature type="chain" id="PRO_0000055654" description="Tyrosine--tRNA ligase">
    <location>
        <begin position="1"/>
        <end position="401"/>
    </location>
</feature>
<feature type="domain" description="S4 RNA-binding" evidence="1">
    <location>
        <begin position="334"/>
        <end position="394"/>
    </location>
</feature>
<feature type="short sequence motif" description="'HIGH' region">
    <location>
        <begin position="42"/>
        <end position="51"/>
    </location>
</feature>
<feature type="short sequence motif" description="'KMSKS' region">
    <location>
        <begin position="226"/>
        <end position="230"/>
    </location>
</feature>
<feature type="binding site" evidence="1">
    <location>
        <position position="229"/>
    </location>
    <ligand>
        <name>ATP</name>
        <dbReference type="ChEBI" id="CHEBI:30616"/>
    </ligand>
</feature>
<sequence>MTDINTVLAELKRGTDEILSEADLIEKLKENRPLKVKLGADPTAPDIHLGHTVVLNKLRQFQQLGHEVYFLIGDFTGMVGDPSGKNATRPPLSREDVLRNAETYKEQIYKILDPQKTKIVFNSEWLSKLGTXGMIRLASNYTVARMLERDDFKKRFGNNQPIAIHEFIYPLLQGYDSVALDADVELGGTDQKFNLLVGRELQKSAGKKPQVAITLPLLVGLDGEKKMSKSLGNYIGVTEAPSDMFGKVMSISDELMWDWYNLLSFRPLNEIAQLKSEVENGKNPRDVKILLAKELIARFHNEEAANAAEQEFINRFQKGAMPDEMPEFTFSGEMGLATLLKEAGLVPSTSEAIRSAQQGGVKINGEKVDNVKDNAPKGTNVYQVGKRKFARVRLNKVDTVK</sequence>
<accession>P43836</accession>
<organism>
    <name type="scientific">Haemophilus influenzae (strain ATCC 51907 / DSM 11121 / KW20 / Rd)</name>
    <dbReference type="NCBI Taxonomy" id="71421"/>
    <lineage>
        <taxon>Bacteria</taxon>
        <taxon>Pseudomonadati</taxon>
        <taxon>Pseudomonadota</taxon>
        <taxon>Gammaproteobacteria</taxon>
        <taxon>Pasteurellales</taxon>
        <taxon>Pasteurellaceae</taxon>
        <taxon>Haemophilus</taxon>
    </lineage>
</organism>
<comment type="function">
    <text evidence="1">Catalyzes the attachment of tyrosine to tRNA(Tyr) in a two-step reaction: tyrosine is first activated by ATP to form Tyr-AMP and then transferred to the acceptor end of tRNA(Tyr).</text>
</comment>
<comment type="catalytic activity">
    <reaction evidence="1">
        <text>tRNA(Tyr) + L-tyrosine + ATP = L-tyrosyl-tRNA(Tyr) + AMP + diphosphate + H(+)</text>
        <dbReference type="Rhea" id="RHEA:10220"/>
        <dbReference type="Rhea" id="RHEA-COMP:9706"/>
        <dbReference type="Rhea" id="RHEA-COMP:9707"/>
        <dbReference type="ChEBI" id="CHEBI:15378"/>
        <dbReference type="ChEBI" id="CHEBI:30616"/>
        <dbReference type="ChEBI" id="CHEBI:33019"/>
        <dbReference type="ChEBI" id="CHEBI:58315"/>
        <dbReference type="ChEBI" id="CHEBI:78442"/>
        <dbReference type="ChEBI" id="CHEBI:78536"/>
        <dbReference type="ChEBI" id="CHEBI:456215"/>
        <dbReference type="EC" id="6.1.1.1"/>
    </reaction>
</comment>
<comment type="subunit">
    <text evidence="1">Homodimer.</text>
</comment>
<comment type="subcellular location">
    <subcellularLocation>
        <location evidence="1">Cytoplasm</location>
    </subcellularLocation>
</comment>
<comment type="similarity">
    <text evidence="1">Belongs to the class-I aminoacyl-tRNA synthetase family. TyrS type 2 subfamily.</text>
</comment>
<keyword id="KW-0030">Aminoacyl-tRNA synthetase</keyword>
<keyword id="KW-0067">ATP-binding</keyword>
<keyword id="KW-0963">Cytoplasm</keyword>
<keyword id="KW-0436">Ligase</keyword>
<keyword id="KW-0547">Nucleotide-binding</keyword>
<keyword id="KW-0648">Protein biosynthesis</keyword>
<keyword id="KW-1185">Reference proteome</keyword>
<keyword id="KW-0694">RNA-binding</keyword>
<evidence type="ECO:0000255" key="1">
    <source>
        <dbReference type="HAMAP-Rule" id="MF_02007"/>
    </source>
</evidence>
<protein>
    <recommendedName>
        <fullName evidence="1">Tyrosine--tRNA ligase</fullName>
        <ecNumber evidence="1">6.1.1.1</ecNumber>
    </recommendedName>
    <alternativeName>
        <fullName evidence="1">Tyrosyl-tRNA synthetase</fullName>
        <shortName evidence="1">TyrRS</shortName>
    </alternativeName>
</protein>
<dbReference type="EC" id="6.1.1.1" evidence="1"/>
<dbReference type="EMBL" id="L42023">
    <property type="protein sequence ID" value="AAC23254.1"/>
    <property type="molecule type" value="Genomic_DNA"/>
</dbReference>
<dbReference type="PIR" id="D64132">
    <property type="entry name" value="D64132"/>
</dbReference>
<dbReference type="RefSeq" id="NP_439752.1">
    <property type="nucleotide sequence ID" value="NC_000907.1"/>
</dbReference>
<dbReference type="STRING" id="71421.HI_1610"/>
<dbReference type="EnsemblBacteria" id="AAC23254">
    <property type="protein sequence ID" value="AAC23254"/>
    <property type="gene ID" value="HI_1610"/>
</dbReference>
<dbReference type="KEGG" id="hin:HI_1610"/>
<dbReference type="PATRIC" id="fig|71421.8.peg.1683"/>
<dbReference type="eggNOG" id="COG0162">
    <property type="taxonomic scope" value="Bacteria"/>
</dbReference>
<dbReference type="HOGENOM" id="CLU_024003_5_0_6"/>
<dbReference type="OrthoDB" id="9804243at2"/>
<dbReference type="PhylomeDB" id="P43836"/>
<dbReference type="BioCyc" id="HINF71421:G1GJ1-1623-MONOMER"/>
<dbReference type="Proteomes" id="UP000000579">
    <property type="component" value="Chromosome"/>
</dbReference>
<dbReference type="GO" id="GO:0005829">
    <property type="term" value="C:cytosol"/>
    <property type="evidence" value="ECO:0000318"/>
    <property type="project" value="GO_Central"/>
</dbReference>
<dbReference type="GO" id="GO:0005524">
    <property type="term" value="F:ATP binding"/>
    <property type="evidence" value="ECO:0007669"/>
    <property type="project" value="UniProtKB-UniRule"/>
</dbReference>
<dbReference type="GO" id="GO:0003723">
    <property type="term" value="F:RNA binding"/>
    <property type="evidence" value="ECO:0007669"/>
    <property type="project" value="UniProtKB-KW"/>
</dbReference>
<dbReference type="GO" id="GO:0004831">
    <property type="term" value="F:tyrosine-tRNA ligase activity"/>
    <property type="evidence" value="ECO:0000318"/>
    <property type="project" value="GO_Central"/>
</dbReference>
<dbReference type="GO" id="GO:0043039">
    <property type="term" value="P:tRNA aminoacylation"/>
    <property type="evidence" value="ECO:0000318"/>
    <property type="project" value="GO_Central"/>
</dbReference>
<dbReference type="GO" id="GO:0006437">
    <property type="term" value="P:tyrosyl-tRNA aminoacylation"/>
    <property type="evidence" value="ECO:0007669"/>
    <property type="project" value="UniProtKB-UniRule"/>
</dbReference>
<dbReference type="CDD" id="cd00165">
    <property type="entry name" value="S4"/>
    <property type="match status" value="1"/>
</dbReference>
<dbReference type="CDD" id="cd00805">
    <property type="entry name" value="TyrRS_core"/>
    <property type="match status" value="1"/>
</dbReference>
<dbReference type="FunFam" id="1.10.240.10:FF:000006">
    <property type="entry name" value="Tyrosine--tRNA ligase"/>
    <property type="match status" value="1"/>
</dbReference>
<dbReference type="FunFam" id="3.10.290.10:FF:000022">
    <property type="entry name" value="Tyrosine--tRNA ligase"/>
    <property type="match status" value="1"/>
</dbReference>
<dbReference type="FunFam" id="3.40.50.620:FF:000061">
    <property type="entry name" value="Tyrosine--tRNA ligase"/>
    <property type="match status" value="1"/>
</dbReference>
<dbReference type="Gene3D" id="3.40.50.620">
    <property type="entry name" value="HUPs"/>
    <property type="match status" value="1"/>
</dbReference>
<dbReference type="Gene3D" id="3.10.290.10">
    <property type="entry name" value="RNA-binding S4 domain"/>
    <property type="match status" value="1"/>
</dbReference>
<dbReference type="Gene3D" id="1.10.240.10">
    <property type="entry name" value="Tyrosyl-Transfer RNA Synthetase"/>
    <property type="match status" value="1"/>
</dbReference>
<dbReference type="HAMAP" id="MF_02007">
    <property type="entry name" value="Tyr_tRNA_synth_type2"/>
    <property type="match status" value="1"/>
</dbReference>
<dbReference type="InterPro" id="IPR001412">
    <property type="entry name" value="aa-tRNA-synth_I_CS"/>
</dbReference>
<dbReference type="InterPro" id="IPR002305">
    <property type="entry name" value="aa-tRNA-synth_Ic"/>
</dbReference>
<dbReference type="InterPro" id="IPR014729">
    <property type="entry name" value="Rossmann-like_a/b/a_fold"/>
</dbReference>
<dbReference type="InterPro" id="IPR002942">
    <property type="entry name" value="S4_RNA-bd"/>
</dbReference>
<dbReference type="InterPro" id="IPR036986">
    <property type="entry name" value="S4_RNA-bd_sf"/>
</dbReference>
<dbReference type="InterPro" id="IPR002307">
    <property type="entry name" value="Tyr-tRNA-ligase"/>
</dbReference>
<dbReference type="InterPro" id="IPR024088">
    <property type="entry name" value="Tyr-tRNA-ligase_bac-type"/>
</dbReference>
<dbReference type="InterPro" id="IPR024108">
    <property type="entry name" value="Tyr-tRNA-ligase_bac_2"/>
</dbReference>
<dbReference type="NCBIfam" id="TIGR00234">
    <property type="entry name" value="tyrS"/>
    <property type="match status" value="1"/>
</dbReference>
<dbReference type="PANTHER" id="PTHR11766:SF1">
    <property type="entry name" value="TYROSINE--TRNA LIGASE"/>
    <property type="match status" value="1"/>
</dbReference>
<dbReference type="PANTHER" id="PTHR11766">
    <property type="entry name" value="TYROSYL-TRNA SYNTHETASE"/>
    <property type="match status" value="1"/>
</dbReference>
<dbReference type="Pfam" id="PF01479">
    <property type="entry name" value="S4"/>
    <property type="match status" value="1"/>
</dbReference>
<dbReference type="Pfam" id="PF00579">
    <property type="entry name" value="tRNA-synt_1b"/>
    <property type="match status" value="1"/>
</dbReference>
<dbReference type="PRINTS" id="PR01040">
    <property type="entry name" value="TRNASYNTHTYR"/>
</dbReference>
<dbReference type="SMART" id="SM00363">
    <property type="entry name" value="S4"/>
    <property type="match status" value="1"/>
</dbReference>
<dbReference type="SUPFAM" id="SSF55174">
    <property type="entry name" value="Alpha-L RNA-binding motif"/>
    <property type="match status" value="1"/>
</dbReference>
<dbReference type="SUPFAM" id="SSF52374">
    <property type="entry name" value="Nucleotidylyl transferase"/>
    <property type="match status" value="1"/>
</dbReference>
<dbReference type="PROSITE" id="PS00178">
    <property type="entry name" value="AA_TRNA_LIGASE_I"/>
    <property type="match status" value="1"/>
</dbReference>
<dbReference type="PROSITE" id="PS50889">
    <property type="entry name" value="S4"/>
    <property type="match status" value="1"/>
</dbReference>
<proteinExistence type="inferred from homology"/>
<name>SYY_HAEIN</name>